<keyword id="KW-0156">Chromatin regulator</keyword>
<keyword id="KW-0217">Developmental protein</keyword>
<keyword id="KW-0539">Nucleus</keyword>
<keyword id="KW-0597">Phosphoprotein</keyword>
<keyword id="KW-1185">Reference proteome</keyword>
<keyword id="KW-0694">RNA-binding</keyword>
<proteinExistence type="evidence at protein level"/>
<evidence type="ECO:0000250" key="1">
    <source>
        <dbReference type="UniProtKB" id="Q12136"/>
    </source>
</evidence>
<evidence type="ECO:0000256" key="2">
    <source>
        <dbReference type="SAM" id="MobiDB-lite"/>
    </source>
</evidence>
<evidence type="ECO:0000269" key="3">
    <source>
    </source>
</evidence>
<evidence type="ECO:0000269" key="4">
    <source>
    </source>
</evidence>
<evidence type="ECO:0000269" key="5">
    <source>
    </source>
</evidence>
<evidence type="ECO:0000269" key="6">
    <source>
    </source>
</evidence>
<evidence type="ECO:0000303" key="7">
    <source>
    </source>
</evidence>
<evidence type="ECO:0000305" key="8"/>
<evidence type="ECO:0000312" key="9">
    <source>
        <dbReference type="EMBL" id="AAG22407.2"/>
    </source>
</evidence>
<evidence type="ECO:0000312" key="10">
    <source>
        <dbReference type="EMBL" id="AAK77307.1"/>
    </source>
</evidence>
<feature type="chain" id="PRO_0000114329" description="Something about silencing protein 10">
    <location>
        <begin position="1"/>
        <end position="428"/>
    </location>
</feature>
<feature type="region of interest" description="Disordered" evidence="2">
    <location>
        <begin position="1"/>
        <end position="93"/>
    </location>
</feature>
<feature type="region of interest" description="Disordered" evidence="2">
    <location>
        <begin position="317"/>
        <end position="386"/>
    </location>
</feature>
<feature type="compositionally biased region" description="Acidic residues" evidence="2">
    <location>
        <begin position="15"/>
        <end position="24"/>
    </location>
</feature>
<feature type="compositionally biased region" description="Acidic residues" evidence="2">
    <location>
        <begin position="46"/>
        <end position="62"/>
    </location>
</feature>
<feature type="compositionally biased region" description="Acidic residues" evidence="2">
    <location>
        <begin position="324"/>
        <end position="336"/>
    </location>
</feature>
<feature type="compositionally biased region" description="Acidic residues" evidence="2">
    <location>
        <begin position="344"/>
        <end position="353"/>
    </location>
</feature>
<feature type="compositionally biased region" description="Basic residues" evidence="2">
    <location>
        <begin position="370"/>
        <end position="386"/>
    </location>
</feature>
<feature type="modified residue" description="Phosphoserine" evidence="6">
    <location>
        <position position="152"/>
    </location>
</feature>
<feature type="modified residue" description="Phosphoserine" evidence="6">
    <location>
        <position position="323"/>
    </location>
</feature>
<feature type="modified residue" description="Phosphoserine" evidence="6">
    <location>
        <position position="324"/>
    </location>
</feature>
<feature type="modified residue" description="Phosphoserine" evidence="6">
    <location>
        <position position="337"/>
    </location>
</feature>
<reference evidence="8 9" key="1">
    <citation type="journal article" date="2000" name="Science">
        <title>The genome sequence of Drosophila melanogaster.</title>
        <authorList>
            <person name="Adams M.D."/>
            <person name="Celniker S.E."/>
            <person name="Holt R.A."/>
            <person name="Evans C.A."/>
            <person name="Gocayne J.D."/>
            <person name="Amanatides P.G."/>
            <person name="Scherer S.E."/>
            <person name="Li P.W."/>
            <person name="Hoskins R.A."/>
            <person name="Galle R.F."/>
            <person name="George R.A."/>
            <person name="Lewis S.E."/>
            <person name="Richards S."/>
            <person name="Ashburner M."/>
            <person name="Henderson S.N."/>
            <person name="Sutton G.G."/>
            <person name="Wortman J.R."/>
            <person name="Yandell M.D."/>
            <person name="Zhang Q."/>
            <person name="Chen L.X."/>
            <person name="Brandon R.C."/>
            <person name="Rogers Y.-H.C."/>
            <person name="Blazej R.G."/>
            <person name="Champe M."/>
            <person name="Pfeiffer B.D."/>
            <person name="Wan K.H."/>
            <person name="Doyle C."/>
            <person name="Baxter E.G."/>
            <person name="Helt G."/>
            <person name="Nelson C.R."/>
            <person name="Miklos G.L.G."/>
            <person name="Abril J.F."/>
            <person name="Agbayani A."/>
            <person name="An H.-J."/>
            <person name="Andrews-Pfannkoch C."/>
            <person name="Baldwin D."/>
            <person name="Ballew R.M."/>
            <person name="Basu A."/>
            <person name="Baxendale J."/>
            <person name="Bayraktaroglu L."/>
            <person name="Beasley E.M."/>
            <person name="Beeson K.Y."/>
            <person name="Benos P.V."/>
            <person name="Berman B.P."/>
            <person name="Bhandari D."/>
            <person name="Bolshakov S."/>
            <person name="Borkova D."/>
            <person name="Botchan M.R."/>
            <person name="Bouck J."/>
            <person name="Brokstein P."/>
            <person name="Brottier P."/>
            <person name="Burtis K.C."/>
            <person name="Busam D.A."/>
            <person name="Butler H."/>
            <person name="Cadieu E."/>
            <person name="Center A."/>
            <person name="Chandra I."/>
            <person name="Cherry J.M."/>
            <person name="Cawley S."/>
            <person name="Dahlke C."/>
            <person name="Davenport L.B."/>
            <person name="Davies P."/>
            <person name="de Pablos B."/>
            <person name="Delcher A."/>
            <person name="Deng Z."/>
            <person name="Mays A.D."/>
            <person name="Dew I."/>
            <person name="Dietz S.M."/>
            <person name="Dodson K."/>
            <person name="Doup L.E."/>
            <person name="Downes M."/>
            <person name="Dugan-Rocha S."/>
            <person name="Dunkov B.C."/>
            <person name="Dunn P."/>
            <person name="Durbin K.J."/>
            <person name="Evangelista C.C."/>
            <person name="Ferraz C."/>
            <person name="Ferriera S."/>
            <person name="Fleischmann W."/>
            <person name="Fosler C."/>
            <person name="Gabrielian A.E."/>
            <person name="Garg N.S."/>
            <person name="Gelbart W.M."/>
            <person name="Glasser K."/>
            <person name="Glodek A."/>
            <person name="Gong F."/>
            <person name="Gorrell J.H."/>
            <person name="Gu Z."/>
            <person name="Guan P."/>
            <person name="Harris M."/>
            <person name="Harris N.L."/>
            <person name="Harvey D.A."/>
            <person name="Heiman T.J."/>
            <person name="Hernandez J.R."/>
            <person name="Houck J."/>
            <person name="Hostin D."/>
            <person name="Houston K.A."/>
            <person name="Howland T.J."/>
            <person name="Wei M.-H."/>
            <person name="Ibegwam C."/>
            <person name="Jalali M."/>
            <person name="Kalush F."/>
            <person name="Karpen G.H."/>
            <person name="Ke Z."/>
            <person name="Kennison J.A."/>
            <person name="Ketchum K.A."/>
            <person name="Kimmel B.E."/>
            <person name="Kodira C.D."/>
            <person name="Kraft C.L."/>
            <person name="Kravitz S."/>
            <person name="Kulp D."/>
            <person name="Lai Z."/>
            <person name="Lasko P."/>
            <person name="Lei Y."/>
            <person name="Levitsky A.A."/>
            <person name="Li J.H."/>
            <person name="Li Z."/>
            <person name="Liang Y."/>
            <person name="Lin X."/>
            <person name="Liu X."/>
            <person name="Mattei B."/>
            <person name="McIntosh T.C."/>
            <person name="McLeod M.P."/>
            <person name="McPherson D."/>
            <person name="Merkulov G."/>
            <person name="Milshina N.V."/>
            <person name="Mobarry C."/>
            <person name="Morris J."/>
            <person name="Moshrefi A."/>
            <person name="Mount S.M."/>
            <person name="Moy M."/>
            <person name="Murphy B."/>
            <person name="Murphy L."/>
            <person name="Muzny D.M."/>
            <person name="Nelson D.L."/>
            <person name="Nelson D.R."/>
            <person name="Nelson K.A."/>
            <person name="Nixon K."/>
            <person name="Nusskern D.R."/>
            <person name="Pacleb J.M."/>
            <person name="Palazzolo M."/>
            <person name="Pittman G.S."/>
            <person name="Pan S."/>
            <person name="Pollard J."/>
            <person name="Puri V."/>
            <person name="Reese M.G."/>
            <person name="Reinert K."/>
            <person name="Remington K."/>
            <person name="Saunders R.D.C."/>
            <person name="Scheeler F."/>
            <person name="Shen H."/>
            <person name="Shue B.C."/>
            <person name="Siden-Kiamos I."/>
            <person name="Simpson M."/>
            <person name="Skupski M.P."/>
            <person name="Smith T.J."/>
            <person name="Spier E."/>
            <person name="Spradling A.C."/>
            <person name="Stapleton M."/>
            <person name="Strong R."/>
            <person name="Sun E."/>
            <person name="Svirskas R."/>
            <person name="Tector C."/>
            <person name="Turner R."/>
            <person name="Venter E."/>
            <person name="Wang A.H."/>
            <person name="Wang X."/>
            <person name="Wang Z.-Y."/>
            <person name="Wassarman D.A."/>
            <person name="Weinstock G.M."/>
            <person name="Weissenbach J."/>
            <person name="Williams S.M."/>
            <person name="Woodage T."/>
            <person name="Worley K.C."/>
            <person name="Wu D."/>
            <person name="Yang S."/>
            <person name="Yao Q.A."/>
            <person name="Ye J."/>
            <person name="Yeh R.-F."/>
            <person name="Zaveri J.S."/>
            <person name="Zhan M."/>
            <person name="Zhang G."/>
            <person name="Zhao Q."/>
            <person name="Zheng L."/>
            <person name="Zheng X.H."/>
            <person name="Zhong F.N."/>
            <person name="Zhong W."/>
            <person name="Zhou X."/>
            <person name="Zhu S.C."/>
            <person name="Zhu X."/>
            <person name="Smith H.O."/>
            <person name="Gibbs R.A."/>
            <person name="Myers E.W."/>
            <person name="Rubin G.M."/>
            <person name="Venter J.C."/>
        </authorList>
    </citation>
    <scope>NUCLEOTIDE SEQUENCE [LARGE SCALE GENOMIC DNA]</scope>
    <source>
        <strain evidence="3">Berkeley</strain>
    </source>
</reference>
<reference evidence="8 9" key="2">
    <citation type="journal article" date="2002" name="Genome Biol.">
        <title>Annotation of the Drosophila melanogaster euchromatic genome: a systematic review.</title>
        <authorList>
            <person name="Misra S."/>
            <person name="Crosby M.A."/>
            <person name="Mungall C.J."/>
            <person name="Matthews B.B."/>
            <person name="Campbell K.S."/>
            <person name="Hradecky P."/>
            <person name="Huang Y."/>
            <person name="Kaminker J.S."/>
            <person name="Millburn G.H."/>
            <person name="Prochnik S.E."/>
            <person name="Smith C.D."/>
            <person name="Tupy J.L."/>
            <person name="Whitfield E.J."/>
            <person name="Bayraktaroglu L."/>
            <person name="Berman B.P."/>
            <person name="Bettencourt B.R."/>
            <person name="Celniker S.E."/>
            <person name="de Grey A.D.N.J."/>
            <person name="Drysdale R.A."/>
            <person name="Harris N.L."/>
            <person name="Richter J."/>
            <person name="Russo S."/>
            <person name="Schroeder A.J."/>
            <person name="Shu S.Q."/>
            <person name="Stapleton M."/>
            <person name="Yamada C."/>
            <person name="Ashburner M."/>
            <person name="Gelbart W.M."/>
            <person name="Rubin G.M."/>
            <person name="Lewis S.E."/>
        </authorList>
    </citation>
    <scope>GENOME REANNOTATION</scope>
    <source>
        <strain>Berkeley</strain>
    </source>
</reference>
<reference evidence="8 10" key="3">
    <citation type="journal article" date="2002" name="Genome Biol.">
        <title>A Drosophila full-length cDNA resource.</title>
        <authorList>
            <person name="Stapleton M."/>
            <person name="Carlson J.W."/>
            <person name="Brokstein P."/>
            <person name="Yu C."/>
            <person name="Champe M."/>
            <person name="George R.A."/>
            <person name="Guarin H."/>
            <person name="Kronmiller B."/>
            <person name="Pacleb J.M."/>
            <person name="Park S."/>
            <person name="Wan K.H."/>
            <person name="Rubin G.M."/>
            <person name="Celniker S.E."/>
        </authorList>
    </citation>
    <scope>NUCLEOTIDE SEQUENCE [LARGE SCALE MRNA]</scope>
    <source>
        <strain evidence="4">Berkeley</strain>
        <tissue evidence="4">Head</tissue>
    </source>
</reference>
<reference evidence="8" key="4">
    <citation type="journal article" date="2003" name="RNA">
        <title>RNA editing and regulation of Drosophila 4f-rnp expression by sas-10 antisense readthrough mRNA transcripts.</title>
        <authorList>
            <person name="Peters N.T."/>
            <person name="Rohrbach J.A."/>
            <person name="Zalewski B.A."/>
            <person name="Byrkett C.M."/>
            <person name="Vaughn J.C."/>
        </authorList>
    </citation>
    <scope>FUNCTION</scope>
    <scope>DEVELOPMENTAL STAGE</scope>
    <source>
        <strain evidence="5">Oregon-R</strain>
    </source>
</reference>
<reference key="5">
    <citation type="journal article" date="2008" name="J. Proteome Res.">
        <title>Phosphoproteome analysis of Drosophila melanogaster embryos.</title>
        <authorList>
            <person name="Zhai B."/>
            <person name="Villen J."/>
            <person name="Beausoleil S.A."/>
            <person name="Mintseris J."/>
            <person name="Gygi S.P."/>
        </authorList>
    </citation>
    <scope>PHOSPHORYLATION [LARGE SCALE ANALYSIS] AT SER-152; SER-323; SER-324 AND SER-337</scope>
    <scope>IDENTIFICATION BY MASS SPECTROMETRY</scope>
    <source>
        <tissue>Embryo</tissue>
    </source>
</reference>
<gene>
    <name evidence="9" type="primary">Sas10</name>
    <name type="ORF">CG4202</name>
</gene>
<comment type="function">
    <text evidence="1 5 7">Essential for gene silencing: has a role in the structure of silenced chromatin. May be involved in gene regulation during development. Binds RNA.</text>
</comment>
<comment type="subcellular location">
    <subcellularLocation>
        <location evidence="8">Nucleus</location>
    </subcellularLocation>
</comment>
<comment type="developmental stage">
    <text evidence="5">The short transcript is expressed moderately during early embryonic stages (0-18 hours) but then declines in late stage embryos (15-21 hours), becoming replaced by the long transcript which persists into the adult body.</text>
</comment>
<comment type="miscellaneous">
    <text evidence="5">Transcription utilizes two promoters. Promoter 1 gives rise to the short transcript encoding Sas10 only. Promoter 2 generates a discistronic transcript of Sas10 and Rnp4F. The longer transcript becomes an RNA duplex which is a target for RNA editing via Adar editase; Rnp4F (not Sas10) is edited.</text>
</comment>
<comment type="similarity">
    <text evidence="8">Belongs to the SAS10 family.</text>
</comment>
<sequence length="428" mass="49454">MDSDGDDYVMSGSDQEYDDEEREILEDLRKQRKKPHDPVQEVLGFSDDDDDDDDDDEEEQQDVAELMRDSDIEGAEDDDRDLPNTMDWGSKRSTYYNTDFVDQDYSSYNAQEEEQARAEEEEAKKIQLRLAKRMSEADFQLDNVEAAPAGSSDDNELSHITKVTSDLAGLSERERRQLMHSESPEFIILTQDFQQHLDEVKNLLKPVLNYVRKHDVPMVPALQYAGLCHTVLTTYCSNVAFYLLLKARRIDVKAHPVIRRLVQLKDLIEELKPRYEEYIRPQLEALLERIEDGDAFTVLDVAQRKAKLQILNKYNDGQQASVSSDDDDNDDDDDAESKEKDLQEEAGEEEEEEDARRGITYQMAKNKGLTPHRKKELRNPRVKHRGKYRKALIRRKGAVRTVRKELQRYGGELSGIKAGVTKSVKFRT</sequence>
<protein>
    <recommendedName>
        <fullName>Something about silencing protein 10</fullName>
    </recommendedName>
</protein>
<name>SAS10_DROME</name>
<organism>
    <name type="scientific">Drosophila melanogaster</name>
    <name type="common">Fruit fly</name>
    <dbReference type="NCBI Taxonomy" id="7227"/>
    <lineage>
        <taxon>Eukaryota</taxon>
        <taxon>Metazoa</taxon>
        <taxon>Ecdysozoa</taxon>
        <taxon>Arthropoda</taxon>
        <taxon>Hexapoda</taxon>
        <taxon>Insecta</taxon>
        <taxon>Pterygota</taxon>
        <taxon>Neoptera</taxon>
        <taxon>Endopterygota</taxon>
        <taxon>Diptera</taxon>
        <taxon>Brachycera</taxon>
        <taxon>Muscomorpha</taxon>
        <taxon>Ephydroidea</taxon>
        <taxon>Drosophilidae</taxon>
        <taxon>Drosophila</taxon>
        <taxon>Sophophora</taxon>
    </lineage>
</organism>
<accession>Q9I7W5</accession>
<accession>Q961T6</accession>
<dbReference type="EMBL" id="AE014298">
    <property type="protein sequence ID" value="AAG22407.2"/>
    <property type="molecule type" value="Genomic_DNA"/>
</dbReference>
<dbReference type="EMBL" id="AY047575">
    <property type="protein sequence ID" value="AAK77307.1"/>
    <property type="molecule type" value="mRNA"/>
</dbReference>
<dbReference type="RefSeq" id="NP_572215.1">
    <property type="nucleotide sequence ID" value="NM_131987.4"/>
</dbReference>
<dbReference type="SMR" id="Q9I7W5"/>
<dbReference type="BioGRID" id="57957">
    <property type="interactions" value="12"/>
</dbReference>
<dbReference type="FunCoup" id="Q9I7W5">
    <property type="interactions" value="1692"/>
</dbReference>
<dbReference type="IntAct" id="Q9I7W5">
    <property type="interactions" value="13"/>
</dbReference>
<dbReference type="STRING" id="7227.FBpp0070719"/>
<dbReference type="iPTMnet" id="Q9I7W5"/>
<dbReference type="PaxDb" id="7227-FBpp0070719"/>
<dbReference type="DNASU" id="31447"/>
<dbReference type="EnsemblMetazoa" id="FBtr0070751">
    <property type="protein sequence ID" value="FBpp0070719"/>
    <property type="gene ID" value="FBgn0029755"/>
</dbReference>
<dbReference type="GeneID" id="31447"/>
<dbReference type="KEGG" id="dme:Dmel_CG4202"/>
<dbReference type="UCSC" id="CG4202-RA">
    <property type="organism name" value="d. melanogaster"/>
</dbReference>
<dbReference type="AGR" id="FB:FBgn0029755"/>
<dbReference type="CTD" id="31447"/>
<dbReference type="FlyBase" id="FBgn0029755">
    <property type="gene designation" value="Sas10"/>
</dbReference>
<dbReference type="VEuPathDB" id="VectorBase:FBgn0029755"/>
<dbReference type="eggNOG" id="KOG3118">
    <property type="taxonomic scope" value="Eukaryota"/>
</dbReference>
<dbReference type="GeneTree" id="ENSGT00500000044947"/>
<dbReference type="HOGENOM" id="CLU_025161_1_0_1"/>
<dbReference type="InParanoid" id="Q9I7W5"/>
<dbReference type="OMA" id="EEYIRPQ"/>
<dbReference type="OrthoDB" id="1924577at2759"/>
<dbReference type="PhylomeDB" id="Q9I7W5"/>
<dbReference type="Reactome" id="R-DME-6791226">
    <property type="pathway name" value="Major pathway of rRNA processing in the nucleolus and cytosol"/>
</dbReference>
<dbReference type="SignaLink" id="Q9I7W5"/>
<dbReference type="BioGRID-ORCS" id="31447">
    <property type="hits" value="0 hits in 1 CRISPR screen"/>
</dbReference>
<dbReference type="GenomeRNAi" id="31447"/>
<dbReference type="PRO" id="PR:Q9I7W5"/>
<dbReference type="Proteomes" id="UP000000803">
    <property type="component" value="Chromosome X"/>
</dbReference>
<dbReference type="Bgee" id="FBgn0029755">
    <property type="expression patterns" value="Expressed in germline cell (Drosophila) in post-embryonic organism and 75 other cell types or tissues"/>
</dbReference>
<dbReference type="GO" id="GO:0005730">
    <property type="term" value="C:nucleolus"/>
    <property type="evidence" value="ECO:0000318"/>
    <property type="project" value="GO_Central"/>
</dbReference>
<dbReference type="GO" id="GO:0032040">
    <property type="term" value="C:small-subunit processome"/>
    <property type="evidence" value="ECO:0000318"/>
    <property type="project" value="GO_Central"/>
</dbReference>
<dbReference type="GO" id="GO:0003723">
    <property type="term" value="F:RNA binding"/>
    <property type="evidence" value="ECO:0007669"/>
    <property type="project" value="UniProtKB-KW"/>
</dbReference>
<dbReference type="GO" id="GO:0006325">
    <property type="term" value="P:chromatin organization"/>
    <property type="evidence" value="ECO:0007669"/>
    <property type="project" value="UniProtKB-KW"/>
</dbReference>
<dbReference type="GO" id="GO:0000462">
    <property type="term" value="P:maturation of SSU-rRNA from tricistronic rRNA transcript (SSU-rRNA, 5.8S rRNA, LSU-rRNA)"/>
    <property type="evidence" value="ECO:0000318"/>
    <property type="project" value="GO_Central"/>
</dbReference>
<dbReference type="InterPro" id="IPR007146">
    <property type="entry name" value="Sas10/Utp3/C1D"/>
</dbReference>
<dbReference type="InterPro" id="IPR018972">
    <property type="entry name" value="Sas10_C_dom"/>
</dbReference>
<dbReference type="PANTHER" id="PTHR13237:SF8">
    <property type="entry name" value="SOMETHING ABOUT SILENCING PROTEIN 10"/>
    <property type="match status" value="1"/>
</dbReference>
<dbReference type="PANTHER" id="PTHR13237">
    <property type="entry name" value="SOMETHING ABOUT SILENCING PROTEIN 10-RELATED"/>
    <property type="match status" value="1"/>
</dbReference>
<dbReference type="Pfam" id="PF09368">
    <property type="entry name" value="Sas10"/>
    <property type="match status" value="1"/>
</dbReference>
<dbReference type="Pfam" id="PF04000">
    <property type="entry name" value="Sas10_Utp3"/>
    <property type="match status" value="1"/>
</dbReference>